<accession>Q1RKE5</accession>
<evidence type="ECO:0000250" key="1"/>
<evidence type="ECO:0000255" key="2"/>
<evidence type="ECO:0000305" key="3"/>
<protein>
    <recommendedName>
        <fullName>NADH-quinone oxidoreductase subunit M</fullName>
        <ecNumber>7.1.1.-</ecNumber>
    </recommendedName>
    <alternativeName>
        <fullName>NADH dehydrogenase I subunit M</fullName>
    </alternativeName>
    <alternativeName>
        <fullName>NDH-1 subunit M</fullName>
    </alternativeName>
</protein>
<feature type="chain" id="PRO_0000272334" description="NADH-quinone oxidoreductase subunit M">
    <location>
        <begin position="1"/>
        <end position="494"/>
    </location>
</feature>
<feature type="transmembrane region" description="Helical" evidence="2">
    <location>
        <begin position="5"/>
        <end position="25"/>
    </location>
</feature>
<feature type="transmembrane region" description="Helical" evidence="2">
    <location>
        <begin position="37"/>
        <end position="57"/>
    </location>
</feature>
<feature type="transmembrane region" description="Helical" evidence="2">
    <location>
        <begin position="89"/>
        <end position="109"/>
    </location>
</feature>
<feature type="transmembrane region" description="Helical" evidence="2">
    <location>
        <begin position="115"/>
        <end position="135"/>
    </location>
</feature>
<feature type="transmembrane region" description="Helical" evidence="2">
    <location>
        <begin position="139"/>
        <end position="159"/>
    </location>
</feature>
<feature type="transmembrane region" description="Helical" evidence="2">
    <location>
        <begin position="172"/>
        <end position="192"/>
    </location>
</feature>
<feature type="transmembrane region" description="Helical" evidence="2">
    <location>
        <begin position="216"/>
        <end position="236"/>
    </location>
</feature>
<feature type="transmembrane region" description="Helical" evidence="2">
    <location>
        <begin position="251"/>
        <end position="271"/>
    </location>
</feature>
<feature type="transmembrane region" description="Helical" evidence="2">
    <location>
        <begin position="280"/>
        <end position="300"/>
    </location>
</feature>
<feature type="transmembrane region" description="Helical" evidence="2">
    <location>
        <begin position="308"/>
        <end position="328"/>
    </location>
</feature>
<feature type="transmembrane region" description="Helical" evidence="2">
    <location>
        <begin position="334"/>
        <end position="354"/>
    </location>
</feature>
<feature type="transmembrane region" description="Helical" evidence="2">
    <location>
        <begin position="375"/>
        <end position="395"/>
    </location>
</feature>
<feature type="transmembrane region" description="Helical" evidence="2">
    <location>
        <begin position="411"/>
        <end position="431"/>
    </location>
</feature>
<feature type="transmembrane region" description="Helical" evidence="2">
    <location>
        <begin position="458"/>
        <end position="478"/>
    </location>
</feature>
<sequence>MLELPIISITIFLPLISVLYILLFISQSKKPDKQIHTMYVAVLSSVLTFISTIYILIEFDSSNPTYQFVERYSWLDKIGLEFHVGIDGISIFFVSLTSFLTLICIIGSLFTVKKYIKEYLVCFLLMESFCIGAFTSINLLVFYLFFEVILVPMYIIIGVWGGENRIYAAVKFFLYTFFGSVFFLLSIIYIYSKIHSFDLSNIGEFTNNFPLHVQQILWWAIFIAFAIKIPMIPFHTWLPDAHVQAPTSGSVILAGILLKLGGYGFLRVLLPLLPNASQEFAIYVIWLSVIAIIYASLVALAQKDMKKMIAYSSITHMGYVTIGIFSFTDSGVSGALFQMLSHGIISSCLFLIVGTLYERLHTKEIAKYGGVASKMPVLATFFMIAMLGSVGLPGTSGFIGEFLSLLGIYKVNVIATFLAALGIILGAIYMLKLYKEVMLGEITNKEIINFRDLYIYEIISIAPLILLIIYFGLMPSSILNVFHLSVENLLVKFF</sequence>
<name>NUOM_RICBR</name>
<comment type="function">
    <text evidence="1">NDH-1 shuttles electrons from NADH, via FMN and iron-sulfur (Fe-S) centers, to quinones in the respiratory chain. Couples the redox reaction to proton translocation (for every two electrons transferred, four hydrogen ions are translocated across the cytoplasmic membrane), and thus conserves the redox energy in a proton gradient (By similarity).</text>
</comment>
<comment type="catalytic activity">
    <reaction>
        <text>a quinone + NADH + 5 H(+)(in) = a quinol + NAD(+) + 4 H(+)(out)</text>
        <dbReference type="Rhea" id="RHEA:57888"/>
        <dbReference type="ChEBI" id="CHEBI:15378"/>
        <dbReference type="ChEBI" id="CHEBI:24646"/>
        <dbReference type="ChEBI" id="CHEBI:57540"/>
        <dbReference type="ChEBI" id="CHEBI:57945"/>
        <dbReference type="ChEBI" id="CHEBI:132124"/>
    </reaction>
</comment>
<comment type="subcellular location">
    <subcellularLocation>
        <location evidence="3">Cell membrane</location>
        <topology evidence="3">Multi-pass membrane protein</topology>
    </subcellularLocation>
</comment>
<comment type="similarity">
    <text evidence="3">Belongs to the complex I subunit 4 family.</text>
</comment>
<organism>
    <name type="scientific">Rickettsia bellii (strain RML369-C)</name>
    <dbReference type="NCBI Taxonomy" id="336407"/>
    <lineage>
        <taxon>Bacteria</taxon>
        <taxon>Pseudomonadati</taxon>
        <taxon>Pseudomonadota</taxon>
        <taxon>Alphaproteobacteria</taxon>
        <taxon>Rickettsiales</taxon>
        <taxon>Rickettsiaceae</taxon>
        <taxon>Rickettsieae</taxon>
        <taxon>Rickettsia</taxon>
        <taxon>belli group</taxon>
    </lineage>
</organism>
<dbReference type="EC" id="7.1.1.-"/>
<dbReference type="EMBL" id="CP000087">
    <property type="protein sequence ID" value="ABE04169.1"/>
    <property type="molecule type" value="Genomic_DNA"/>
</dbReference>
<dbReference type="RefSeq" id="WP_011476784.1">
    <property type="nucleotide sequence ID" value="NC_007940.1"/>
</dbReference>
<dbReference type="SMR" id="Q1RKE5"/>
<dbReference type="KEGG" id="rbe:RBE_0088"/>
<dbReference type="eggNOG" id="COG1008">
    <property type="taxonomic scope" value="Bacteria"/>
</dbReference>
<dbReference type="HOGENOM" id="CLU_007100_4_4_5"/>
<dbReference type="OrthoDB" id="9768329at2"/>
<dbReference type="Proteomes" id="UP000001951">
    <property type="component" value="Chromosome"/>
</dbReference>
<dbReference type="GO" id="GO:0005886">
    <property type="term" value="C:plasma membrane"/>
    <property type="evidence" value="ECO:0007669"/>
    <property type="project" value="UniProtKB-SubCell"/>
</dbReference>
<dbReference type="GO" id="GO:0008137">
    <property type="term" value="F:NADH dehydrogenase (ubiquinone) activity"/>
    <property type="evidence" value="ECO:0007669"/>
    <property type="project" value="InterPro"/>
</dbReference>
<dbReference type="GO" id="GO:0048039">
    <property type="term" value="F:ubiquinone binding"/>
    <property type="evidence" value="ECO:0007669"/>
    <property type="project" value="TreeGrafter"/>
</dbReference>
<dbReference type="GO" id="GO:0042773">
    <property type="term" value="P:ATP synthesis coupled electron transport"/>
    <property type="evidence" value="ECO:0007669"/>
    <property type="project" value="InterPro"/>
</dbReference>
<dbReference type="GO" id="GO:0015990">
    <property type="term" value="P:electron transport coupled proton transport"/>
    <property type="evidence" value="ECO:0007669"/>
    <property type="project" value="TreeGrafter"/>
</dbReference>
<dbReference type="InterPro" id="IPR010227">
    <property type="entry name" value="NADH_Q_OxRdtase_chainM/4"/>
</dbReference>
<dbReference type="InterPro" id="IPR003918">
    <property type="entry name" value="NADH_UbQ_OxRdtase"/>
</dbReference>
<dbReference type="InterPro" id="IPR001750">
    <property type="entry name" value="ND/Mrp_TM"/>
</dbReference>
<dbReference type="NCBIfam" id="TIGR01972">
    <property type="entry name" value="NDH_I_M"/>
    <property type="match status" value="1"/>
</dbReference>
<dbReference type="NCBIfam" id="NF004499">
    <property type="entry name" value="PRK05846.1-3"/>
    <property type="match status" value="1"/>
</dbReference>
<dbReference type="NCBIfam" id="NF004506">
    <property type="entry name" value="PRK05846.2-6"/>
    <property type="match status" value="1"/>
</dbReference>
<dbReference type="PANTHER" id="PTHR43507">
    <property type="entry name" value="NADH-UBIQUINONE OXIDOREDUCTASE CHAIN 4"/>
    <property type="match status" value="1"/>
</dbReference>
<dbReference type="PANTHER" id="PTHR43507:SF1">
    <property type="entry name" value="NADH-UBIQUINONE OXIDOREDUCTASE CHAIN 4"/>
    <property type="match status" value="1"/>
</dbReference>
<dbReference type="Pfam" id="PF00361">
    <property type="entry name" value="Proton_antipo_M"/>
    <property type="match status" value="1"/>
</dbReference>
<dbReference type="PRINTS" id="PR01437">
    <property type="entry name" value="NUOXDRDTASE4"/>
</dbReference>
<proteinExistence type="inferred from homology"/>
<reference key="1">
    <citation type="journal article" date="2006" name="PLoS Genet.">
        <title>Genome sequence of Rickettsia bellii illuminates the role of amoebae in gene exchanges between intracellular pathogens.</title>
        <authorList>
            <person name="Ogata H."/>
            <person name="La Scola B."/>
            <person name="Audic S."/>
            <person name="Renesto P."/>
            <person name="Blanc G."/>
            <person name="Robert C."/>
            <person name="Fournier P.-E."/>
            <person name="Claverie J.-M."/>
            <person name="Raoult D."/>
        </authorList>
    </citation>
    <scope>NUCLEOTIDE SEQUENCE [LARGE SCALE GENOMIC DNA]</scope>
    <source>
        <strain>RML369-C</strain>
    </source>
</reference>
<keyword id="KW-1003">Cell membrane</keyword>
<keyword id="KW-0472">Membrane</keyword>
<keyword id="KW-0520">NAD</keyword>
<keyword id="KW-0874">Quinone</keyword>
<keyword id="KW-1278">Translocase</keyword>
<keyword id="KW-0812">Transmembrane</keyword>
<keyword id="KW-1133">Transmembrane helix</keyword>
<gene>
    <name type="primary">nuoM</name>
    <name type="ordered locus">RBE_0088</name>
</gene>